<sequence>MGAEIDSRIEDEQKLVDDMLKVLPEKAARNRRKHIVVRNCSTEQHIEADDKVIPGILTNRGCAFAGTKGVVFGPIKDMVHLVHGPIGCAFYTWGTRRNFAKAEEGGDNFMNYCVCTDMKETDIVFGGEKKLKKAIDEVVKIFHPEAITICATCPVGLIGDDIESVAREAEKEHGIKVIPARCEGYRGVSQSAGHHIASNALMEHLIGTEEIKSPTPFDINVFGEYNIGGDLWEVKPIFEKIGYRIVSSLTGDGSFHRISQAHQAKLSILVCHRSINYTNRMMEEKYGVPWLKVNYIGTKGTEKLLRKMAEFFDDPELTRKTEEVIAEEKAKYAEDIEKYRKKLKGKTAFIYAGGSRSHHYINLFEELGMKVIAAGYQFAHRDDYEGRQIIPQIKEKALGSILEDVHYERDENVKPTVSPERIEELKTKIGLMDYKGLFPDAEDGTIVIDDLNHHETEVLVKTLKPDIFCSGIKDKYWAQKPWSPSRQIHSYDYSGRYTGFSGVLNFARDIDMALHSPTWKFIRPPWKAENVE</sequence>
<organism>
    <name type="scientific">Methanosarcina barkeri</name>
    <dbReference type="NCBI Taxonomy" id="2208"/>
    <lineage>
        <taxon>Archaea</taxon>
        <taxon>Methanobacteriati</taxon>
        <taxon>Methanobacteriota</taxon>
        <taxon>Stenosarchaea group</taxon>
        <taxon>Methanomicrobia</taxon>
        <taxon>Methanosarcinales</taxon>
        <taxon>Methanosarcinaceae</taxon>
        <taxon>Methanosarcina</taxon>
    </lineage>
</organism>
<proteinExistence type="inferred from homology"/>
<accession>P55170</accession>
<evidence type="ECO:0000250" key="1"/>
<evidence type="ECO:0000305" key="2"/>
<dbReference type="EC" id="1.18.6.1"/>
<dbReference type="EMBL" id="U11291">
    <property type="protein sequence ID" value="AAA65880.1"/>
    <property type="molecule type" value="Genomic_DNA"/>
</dbReference>
<dbReference type="SMR" id="P55170"/>
<dbReference type="GO" id="GO:0016612">
    <property type="term" value="C:molybdenum-iron nitrogenase complex"/>
    <property type="evidence" value="ECO:0007669"/>
    <property type="project" value="InterPro"/>
</dbReference>
<dbReference type="GO" id="GO:0005524">
    <property type="term" value="F:ATP binding"/>
    <property type="evidence" value="ECO:0007669"/>
    <property type="project" value="UniProtKB-KW"/>
</dbReference>
<dbReference type="GO" id="GO:0051536">
    <property type="term" value="F:iron-sulfur cluster binding"/>
    <property type="evidence" value="ECO:0007669"/>
    <property type="project" value="UniProtKB-KW"/>
</dbReference>
<dbReference type="GO" id="GO:0046872">
    <property type="term" value="F:metal ion binding"/>
    <property type="evidence" value="ECO:0007669"/>
    <property type="project" value="UniProtKB-KW"/>
</dbReference>
<dbReference type="GO" id="GO:0016163">
    <property type="term" value="F:nitrogenase activity"/>
    <property type="evidence" value="ECO:0007669"/>
    <property type="project" value="UniProtKB-EC"/>
</dbReference>
<dbReference type="GO" id="GO:0009399">
    <property type="term" value="P:nitrogen fixation"/>
    <property type="evidence" value="ECO:0007669"/>
    <property type="project" value="UniProtKB-KW"/>
</dbReference>
<dbReference type="CDD" id="cd01976">
    <property type="entry name" value="Nitrogenase_MoFe_alpha"/>
    <property type="match status" value="1"/>
</dbReference>
<dbReference type="Gene3D" id="3.40.50.12380">
    <property type="entry name" value="Nitrogenase MoFe cofactor biosynthesis protein NifE, C-terminal"/>
    <property type="match status" value="1"/>
</dbReference>
<dbReference type="Gene3D" id="3.40.50.1980">
    <property type="entry name" value="Nitrogenase molybdenum iron protein domain"/>
    <property type="match status" value="2"/>
</dbReference>
<dbReference type="InterPro" id="IPR000510">
    <property type="entry name" value="Nase/OxRdtase_comp1"/>
</dbReference>
<dbReference type="InterPro" id="IPR010143">
    <property type="entry name" value="Nase_comp1_asu"/>
</dbReference>
<dbReference type="InterPro" id="IPR000318">
    <property type="entry name" value="Nase_comp1_CS"/>
</dbReference>
<dbReference type="InterPro" id="IPR005972">
    <property type="entry name" value="Nase_Mo-Fe_asu"/>
</dbReference>
<dbReference type="NCBIfam" id="TIGR01862">
    <property type="entry name" value="N2-ase-Ialpha"/>
    <property type="match status" value="1"/>
</dbReference>
<dbReference type="NCBIfam" id="TIGR01282">
    <property type="entry name" value="nifD"/>
    <property type="match status" value="1"/>
</dbReference>
<dbReference type="PANTHER" id="PTHR43457">
    <property type="entry name" value="NITROGENASE MOLYBDENUM-IRON PROTEIN ALPHA CHAIN"/>
    <property type="match status" value="1"/>
</dbReference>
<dbReference type="PANTHER" id="PTHR43457:SF1">
    <property type="entry name" value="NITROGENASE MOLYBDENUM-IRON PROTEIN ALPHA CHAIN"/>
    <property type="match status" value="1"/>
</dbReference>
<dbReference type="Pfam" id="PF00148">
    <property type="entry name" value="Oxidored_nitro"/>
    <property type="match status" value="1"/>
</dbReference>
<dbReference type="SUPFAM" id="SSF53807">
    <property type="entry name" value="Helical backbone' metal receptor"/>
    <property type="match status" value="1"/>
</dbReference>
<dbReference type="PROSITE" id="PS00699">
    <property type="entry name" value="NITROGENASE_1_1"/>
    <property type="match status" value="1"/>
</dbReference>
<dbReference type="PROSITE" id="PS00090">
    <property type="entry name" value="NITROGENASE_1_2"/>
    <property type="match status" value="1"/>
</dbReference>
<name>NIFD_METBA</name>
<feature type="chain" id="PRO_0000153071" description="Nitrogenase molybdenum-iron protein alpha chain">
    <location>
        <begin position="1"/>
        <end position="532"/>
    </location>
</feature>
<feature type="binding site" evidence="1">
    <location>
        <position position="62"/>
    </location>
    <ligand>
        <name>[8Fe-7S] cluster</name>
        <dbReference type="ChEBI" id="CHEBI:21143"/>
        <note>ligand shared with beta chain</note>
    </ligand>
</feature>
<feature type="binding site" evidence="1">
    <location>
        <position position="88"/>
    </location>
    <ligand>
        <name>[8Fe-7S] cluster</name>
        <dbReference type="ChEBI" id="CHEBI:21143"/>
        <note>ligand shared with beta chain</note>
    </ligand>
</feature>
<feature type="binding site" evidence="1">
    <location>
        <position position="153"/>
    </location>
    <ligand>
        <name>[8Fe-7S] cluster</name>
        <dbReference type="ChEBI" id="CHEBI:21143"/>
        <note>ligand shared with beta chain</note>
    </ligand>
</feature>
<feature type="binding site" evidence="1">
    <location>
        <position position="271"/>
    </location>
    <ligand>
        <name>[7Fe-Mo-9S-C-homocitryl] cluster</name>
        <dbReference type="ChEBI" id="CHEBI:30409"/>
    </ligand>
</feature>
<feature type="binding site" evidence="1">
    <location>
        <position position="489"/>
    </location>
    <ligand>
        <name>[7Fe-Mo-9S-C-homocitryl] cluster</name>
        <dbReference type="ChEBI" id="CHEBI:30409"/>
    </ligand>
</feature>
<reference key="1">
    <citation type="journal article" date="1994" name="J. Bacteriol.">
        <title>Cloning, DNA sequencing, and characterization of a nifD-homologous gene from the archaeon Methanosarcina barkeri 227 which resembles nifD1 from the eubacterium Clostridium pasteurianum.</title>
        <authorList>
            <person name="Chien Y.-T."/>
            <person name="Zinder S.H."/>
        </authorList>
    </citation>
    <scope>NUCLEOTIDE SEQUENCE [GENOMIC DNA]</scope>
    <source>
        <strain>ATCC 43241 / DSM 1538 / 227</strain>
    </source>
</reference>
<comment type="function">
    <text>This molybdenum-iron protein is part of the nitrogenase complex that catalyzes the key enzymatic reactions in nitrogen fixation.</text>
</comment>
<comment type="catalytic activity">
    <reaction>
        <text>N2 + 8 reduced [2Fe-2S]-[ferredoxin] + 16 ATP + 16 H2O = H2 + 8 oxidized [2Fe-2S]-[ferredoxin] + 2 NH4(+) + 16 ADP + 16 phosphate + 6 H(+)</text>
        <dbReference type="Rhea" id="RHEA:21448"/>
        <dbReference type="Rhea" id="RHEA-COMP:10000"/>
        <dbReference type="Rhea" id="RHEA-COMP:10001"/>
        <dbReference type="ChEBI" id="CHEBI:15377"/>
        <dbReference type="ChEBI" id="CHEBI:15378"/>
        <dbReference type="ChEBI" id="CHEBI:17997"/>
        <dbReference type="ChEBI" id="CHEBI:18276"/>
        <dbReference type="ChEBI" id="CHEBI:28938"/>
        <dbReference type="ChEBI" id="CHEBI:30616"/>
        <dbReference type="ChEBI" id="CHEBI:33737"/>
        <dbReference type="ChEBI" id="CHEBI:33738"/>
        <dbReference type="ChEBI" id="CHEBI:43474"/>
        <dbReference type="ChEBI" id="CHEBI:456216"/>
        <dbReference type="EC" id="1.18.6.1"/>
    </reaction>
</comment>
<comment type="cofactor">
    <cofactor evidence="1">
        <name>[8Fe-7S] cluster</name>
        <dbReference type="ChEBI" id="CHEBI:21143"/>
    </cofactor>
    <text evidence="1">Binds 1 [8Fe-7S] cluster per heterodimer.</text>
</comment>
<comment type="cofactor">
    <cofactor evidence="1">
        <name>[7Fe-Mo-9S-C-homocitryl] cluster</name>
        <dbReference type="ChEBI" id="CHEBI:30409"/>
    </cofactor>
    <text evidence="1">Binds 1 [7Fe-Mo-9S-C-homocitryl] cluster per subunit.</text>
</comment>
<comment type="subunit">
    <text>Tetramer of two alpha and two beta chains. Forms complex with the iron protein (nitrogenase component 2).</text>
</comment>
<comment type="similarity">
    <text evidence="2">Belongs to the NifD/NifK/NifE/NifN family.</text>
</comment>
<keyword id="KW-0067">ATP-binding</keyword>
<keyword id="KW-0408">Iron</keyword>
<keyword id="KW-0411">Iron-sulfur</keyword>
<keyword id="KW-0479">Metal-binding</keyword>
<keyword id="KW-0500">Molybdenum</keyword>
<keyword id="KW-0535">Nitrogen fixation</keyword>
<keyword id="KW-0547">Nucleotide-binding</keyword>
<keyword id="KW-0560">Oxidoreductase</keyword>
<gene>
    <name type="primary">nifD2</name>
</gene>
<protein>
    <recommendedName>
        <fullName>Nitrogenase molybdenum-iron protein alpha chain</fullName>
        <ecNumber>1.18.6.1</ecNumber>
    </recommendedName>
    <alternativeName>
        <fullName>Dinitrogenase</fullName>
    </alternativeName>
    <alternativeName>
        <fullName>Nitrogenase component I</fullName>
    </alternativeName>
</protein>